<feature type="chain" id="PRO_0000100558" description="Phosphoribosylformylglycinamidine synthase subunit PurQ">
    <location>
        <begin position="1"/>
        <end position="223"/>
    </location>
</feature>
<feature type="domain" description="Glutamine amidotransferase type-1" evidence="1">
    <location>
        <begin position="2"/>
        <end position="223"/>
    </location>
</feature>
<feature type="active site" description="Nucleophile" evidence="1">
    <location>
        <position position="86"/>
    </location>
</feature>
<feature type="active site" evidence="1">
    <location>
        <position position="195"/>
    </location>
</feature>
<feature type="active site" evidence="1">
    <location>
        <position position="197"/>
    </location>
</feature>
<proteinExistence type="inferred from homology"/>
<sequence length="223" mass="24508">MKIAVVVFPGSNCDIDMYEAFHTVCKDDVEYVSYKEKSLDGFDVVVLPGGFSYGDYLRTGAIARFSNIIPAVENMAKEGKLVLGVCNGFQILTEMGLLPGALKKNDSLQFVCKTVTLEVENMHTPFTNEYADKEFIQIPIAHGDGSYYADENVLEELEDNHQVVFRYHGENPNGSLHDIAGICNKEGNVLGMMPHPERAVEEILGGIDGLPLFKSLLKAGVQA</sequence>
<accession>Q5FIV0</accession>
<protein>
    <recommendedName>
        <fullName evidence="1">Phosphoribosylformylglycinamidine synthase subunit PurQ</fullName>
        <shortName evidence="1">FGAM synthase</shortName>
        <ecNumber evidence="1">6.3.5.3</ecNumber>
    </recommendedName>
    <alternativeName>
        <fullName evidence="1">Formylglycinamide ribonucleotide amidotransferase subunit I</fullName>
        <shortName evidence="1">FGAR amidotransferase I</shortName>
        <shortName evidence="1">FGAR-AT I</shortName>
    </alternativeName>
    <alternativeName>
        <fullName evidence="1">Glutaminase PurQ</fullName>
        <ecNumber evidence="1">3.5.1.2</ecNumber>
    </alternativeName>
    <alternativeName>
        <fullName evidence="1">Phosphoribosylformylglycinamidine synthase subunit I</fullName>
    </alternativeName>
</protein>
<reference key="1">
    <citation type="journal article" date="2005" name="Proc. Natl. Acad. Sci. U.S.A.">
        <title>Complete genome sequence of the probiotic lactic acid bacterium Lactobacillus acidophilus NCFM.</title>
        <authorList>
            <person name="Altermann E."/>
            <person name="Russell W.M."/>
            <person name="Azcarate-Peril M.A."/>
            <person name="Barrangou R."/>
            <person name="Buck B.L."/>
            <person name="McAuliffe O."/>
            <person name="Souther N."/>
            <person name="Dobson A."/>
            <person name="Duong T."/>
            <person name="Callanan M."/>
            <person name="Lick S."/>
            <person name="Hamrick A."/>
            <person name="Cano R."/>
            <person name="Klaenhammer T.R."/>
        </authorList>
    </citation>
    <scope>NUCLEOTIDE SEQUENCE [LARGE SCALE GENOMIC DNA]</scope>
    <source>
        <strain>ATCC 700396 / NCK56 / N2 / NCFM</strain>
    </source>
</reference>
<gene>
    <name evidence="1" type="primary">purQ</name>
    <name type="ordered locus">LBA1557</name>
</gene>
<dbReference type="EC" id="6.3.5.3" evidence="1"/>
<dbReference type="EC" id="3.5.1.2" evidence="1"/>
<dbReference type="EMBL" id="CP000033">
    <property type="protein sequence ID" value="AAV43374.1"/>
    <property type="molecule type" value="Genomic_DNA"/>
</dbReference>
<dbReference type="RefSeq" id="WP_003548368.1">
    <property type="nucleotide sequence ID" value="NC_006814.3"/>
</dbReference>
<dbReference type="RefSeq" id="YP_194405.1">
    <property type="nucleotide sequence ID" value="NC_006814.3"/>
</dbReference>
<dbReference type="SMR" id="Q5FIV0"/>
<dbReference type="STRING" id="272621.LBA1557"/>
<dbReference type="GeneID" id="93289377"/>
<dbReference type="KEGG" id="lac:LBA1557"/>
<dbReference type="PATRIC" id="fig|272621.13.peg.1479"/>
<dbReference type="eggNOG" id="COG0047">
    <property type="taxonomic scope" value="Bacteria"/>
</dbReference>
<dbReference type="HOGENOM" id="CLU_001031_3_1_9"/>
<dbReference type="OrthoDB" id="9804441at2"/>
<dbReference type="BioCyc" id="LACI272621:G1G49-1522-MONOMER"/>
<dbReference type="UniPathway" id="UPA00074">
    <property type="reaction ID" value="UER00128"/>
</dbReference>
<dbReference type="Proteomes" id="UP000006381">
    <property type="component" value="Chromosome"/>
</dbReference>
<dbReference type="GO" id="GO:0005737">
    <property type="term" value="C:cytoplasm"/>
    <property type="evidence" value="ECO:0007669"/>
    <property type="project" value="UniProtKB-SubCell"/>
</dbReference>
<dbReference type="GO" id="GO:0005524">
    <property type="term" value="F:ATP binding"/>
    <property type="evidence" value="ECO:0007669"/>
    <property type="project" value="UniProtKB-KW"/>
</dbReference>
<dbReference type="GO" id="GO:0004359">
    <property type="term" value="F:glutaminase activity"/>
    <property type="evidence" value="ECO:0007669"/>
    <property type="project" value="UniProtKB-EC"/>
</dbReference>
<dbReference type="GO" id="GO:0004642">
    <property type="term" value="F:phosphoribosylformylglycinamidine synthase activity"/>
    <property type="evidence" value="ECO:0007669"/>
    <property type="project" value="UniProtKB-UniRule"/>
</dbReference>
<dbReference type="GO" id="GO:0006189">
    <property type="term" value="P:'de novo' IMP biosynthetic process"/>
    <property type="evidence" value="ECO:0007669"/>
    <property type="project" value="UniProtKB-UniRule"/>
</dbReference>
<dbReference type="CDD" id="cd01740">
    <property type="entry name" value="GATase1_FGAR_AT"/>
    <property type="match status" value="1"/>
</dbReference>
<dbReference type="FunFam" id="3.40.50.880:FF:000019">
    <property type="entry name" value="Phosphoribosylformylglycinamidine synthase subunit PurQ"/>
    <property type="match status" value="1"/>
</dbReference>
<dbReference type="Gene3D" id="3.40.50.880">
    <property type="match status" value="1"/>
</dbReference>
<dbReference type="HAMAP" id="MF_00421">
    <property type="entry name" value="PurQ"/>
    <property type="match status" value="1"/>
</dbReference>
<dbReference type="InterPro" id="IPR029062">
    <property type="entry name" value="Class_I_gatase-like"/>
</dbReference>
<dbReference type="InterPro" id="IPR010075">
    <property type="entry name" value="PRibForGlyAmidine_synth_PurQ"/>
</dbReference>
<dbReference type="NCBIfam" id="TIGR01737">
    <property type="entry name" value="FGAM_synth_I"/>
    <property type="match status" value="1"/>
</dbReference>
<dbReference type="NCBIfam" id="NF002957">
    <property type="entry name" value="PRK03619.1"/>
    <property type="match status" value="1"/>
</dbReference>
<dbReference type="PANTHER" id="PTHR47552">
    <property type="entry name" value="PHOSPHORIBOSYLFORMYLGLYCINAMIDINE SYNTHASE SUBUNIT PURQ"/>
    <property type="match status" value="1"/>
</dbReference>
<dbReference type="PANTHER" id="PTHR47552:SF1">
    <property type="entry name" value="PHOSPHORIBOSYLFORMYLGLYCINAMIDINE SYNTHASE SUBUNIT PURQ"/>
    <property type="match status" value="1"/>
</dbReference>
<dbReference type="Pfam" id="PF13507">
    <property type="entry name" value="GATase_5"/>
    <property type="match status" value="1"/>
</dbReference>
<dbReference type="PIRSF" id="PIRSF001586">
    <property type="entry name" value="FGAM_synth_I"/>
    <property type="match status" value="1"/>
</dbReference>
<dbReference type="SMART" id="SM01211">
    <property type="entry name" value="GATase_5"/>
    <property type="match status" value="1"/>
</dbReference>
<dbReference type="SUPFAM" id="SSF52317">
    <property type="entry name" value="Class I glutamine amidotransferase-like"/>
    <property type="match status" value="1"/>
</dbReference>
<dbReference type="PROSITE" id="PS51273">
    <property type="entry name" value="GATASE_TYPE_1"/>
    <property type="match status" value="1"/>
</dbReference>
<evidence type="ECO:0000255" key="1">
    <source>
        <dbReference type="HAMAP-Rule" id="MF_00421"/>
    </source>
</evidence>
<comment type="function">
    <text evidence="1">Part of the phosphoribosylformylglycinamidine synthase complex involved in the purines biosynthetic pathway. Catalyzes the ATP-dependent conversion of formylglycinamide ribonucleotide (FGAR) and glutamine to yield formylglycinamidine ribonucleotide (FGAM) and glutamate. The FGAM synthase complex is composed of three subunits. PurQ produces an ammonia molecule by converting glutamine to glutamate. PurL transfers the ammonia molecule to FGAR to form FGAM in an ATP-dependent manner. PurS interacts with PurQ and PurL and is thought to assist in the transfer of the ammonia molecule from PurQ to PurL.</text>
</comment>
<comment type="catalytic activity">
    <reaction evidence="1">
        <text>N(2)-formyl-N(1)-(5-phospho-beta-D-ribosyl)glycinamide + L-glutamine + ATP + H2O = 2-formamido-N(1)-(5-O-phospho-beta-D-ribosyl)acetamidine + L-glutamate + ADP + phosphate + H(+)</text>
        <dbReference type="Rhea" id="RHEA:17129"/>
        <dbReference type="ChEBI" id="CHEBI:15377"/>
        <dbReference type="ChEBI" id="CHEBI:15378"/>
        <dbReference type="ChEBI" id="CHEBI:29985"/>
        <dbReference type="ChEBI" id="CHEBI:30616"/>
        <dbReference type="ChEBI" id="CHEBI:43474"/>
        <dbReference type="ChEBI" id="CHEBI:58359"/>
        <dbReference type="ChEBI" id="CHEBI:147286"/>
        <dbReference type="ChEBI" id="CHEBI:147287"/>
        <dbReference type="ChEBI" id="CHEBI:456216"/>
        <dbReference type="EC" id="6.3.5.3"/>
    </reaction>
</comment>
<comment type="catalytic activity">
    <reaction evidence="1">
        <text>L-glutamine + H2O = L-glutamate + NH4(+)</text>
        <dbReference type="Rhea" id="RHEA:15889"/>
        <dbReference type="ChEBI" id="CHEBI:15377"/>
        <dbReference type="ChEBI" id="CHEBI:28938"/>
        <dbReference type="ChEBI" id="CHEBI:29985"/>
        <dbReference type="ChEBI" id="CHEBI:58359"/>
        <dbReference type="EC" id="3.5.1.2"/>
    </reaction>
</comment>
<comment type="pathway">
    <text evidence="1">Purine metabolism; IMP biosynthesis via de novo pathway; 5-amino-1-(5-phospho-D-ribosyl)imidazole from N(2)-formyl-N(1)-(5-phospho-D-ribosyl)glycinamide: step 1/2.</text>
</comment>
<comment type="subunit">
    <text evidence="1">Part of the FGAM synthase complex composed of 1 PurL, 1 PurQ and 2 PurS subunits.</text>
</comment>
<comment type="subcellular location">
    <subcellularLocation>
        <location evidence="1">Cytoplasm</location>
    </subcellularLocation>
</comment>
<organism>
    <name type="scientific">Lactobacillus acidophilus (strain ATCC 700396 / NCK56 / N2 / NCFM)</name>
    <dbReference type="NCBI Taxonomy" id="272621"/>
    <lineage>
        <taxon>Bacteria</taxon>
        <taxon>Bacillati</taxon>
        <taxon>Bacillota</taxon>
        <taxon>Bacilli</taxon>
        <taxon>Lactobacillales</taxon>
        <taxon>Lactobacillaceae</taxon>
        <taxon>Lactobacillus</taxon>
    </lineage>
</organism>
<keyword id="KW-0067">ATP-binding</keyword>
<keyword id="KW-0963">Cytoplasm</keyword>
<keyword id="KW-0315">Glutamine amidotransferase</keyword>
<keyword id="KW-0378">Hydrolase</keyword>
<keyword id="KW-0436">Ligase</keyword>
<keyword id="KW-0547">Nucleotide-binding</keyword>
<keyword id="KW-0658">Purine biosynthesis</keyword>
<keyword id="KW-1185">Reference proteome</keyword>
<name>PURQ_LACAC</name>